<dbReference type="EC" id="2.3.1.-"/>
<dbReference type="EMBL" id="BC108800">
    <property type="protein sequence ID" value="AAI08801.1"/>
    <property type="molecule type" value="mRNA"/>
</dbReference>
<dbReference type="RefSeq" id="NP_001090150.1">
    <property type="nucleotide sequence ID" value="NM_001096681.1"/>
</dbReference>
<dbReference type="SMR" id="Q32N70"/>
<dbReference type="BioGRID" id="593010">
    <property type="interactions" value="1"/>
</dbReference>
<dbReference type="DNASU" id="735229"/>
<dbReference type="GeneID" id="735229"/>
<dbReference type="KEGG" id="xla:735229"/>
<dbReference type="AGR" id="Xenbase:XB-GENE-6254082"/>
<dbReference type="CTD" id="735229"/>
<dbReference type="Xenbase" id="XB-GENE-6254082">
    <property type="gene designation" value="ykt6.L"/>
</dbReference>
<dbReference type="OMA" id="HYIGIIR"/>
<dbReference type="OrthoDB" id="27923at2759"/>
<dbReference type="Proteomes" id="UP000186698">
    <property type="component" value="Chromosome 3L"/>
</dbReference>
<dbReference type="Bgee" id="735229">
    <property type="expression patterns" value="Expressed in blastula and 19 other cell types or tissues"/>
</dbReference>
<dbReference type="GO" id="GO:0030659">
    <property type="term" value="C:cytoplasmic vesicle membrane"/>
    <property type="evidence" value="ECO:0007669"/>
    <property type="project" value="UniProtKB-SubCell"/>
</dbReference>
<dbReference type="GO" id="GO:0005829">
    <property type="term" value="C:cytosol"/>
    <property type="evidence" value="ECO:0007669"/>
    <property type="project" value="UniProtKB-SubCell"/>
</dbReference>
<dbReference type="GO" id="GO:0005783">
    <property type="term" value="C:endoplasmic reticulum"/>
    <property type="evidence" value="ECO:0000250"/>
    <property type="project" value="HGNC-UCL"/>
</dbReference>
<dbReference type="GO" id="GO:0005794">
    <property type="term" value="C:Golgi apparatus"/>
    <property type="evidence" value="ECO:0000318"/>
    <property type="project" value="GO_Central"/>
</dbReference>
<dbReference type="GO" id="GO:0000139">
    <property type="term" value="C:Golgi membrane"/>
    <property type="evidence" value="ECO:0007669"/>
    <property type="project" value="UniProtKB-SubCell"/>
</dbReference>
<dbReference type="GO" id="GO:0005886">
    <property type="term" value="C:plasma membrane"/>
    <property type="evidence" value="ECO:0000250"/>
    <property type="project" value="HGNC-UCL"/>
</dbReference>
<dbReference type="GO" id="GO:0019706">
    <property type="term" value="F:protein-cysteine S-palmitoyltransferase activity"/>
    <property type="evidence" value="ECO:0000250"/>
    <property type="project" value="HGNC-UCL"/>
</dbReference>
<dbReference type="GO" id="GO:0005484">
    <property type="term" value="F:SNAP receptor activity"/>
    <property type="evidence" value="ECO:0000318"/>
    <property type="project" value="GO_Central"/>
</dbReference>
<dbReference type="GO" id="GO:0006888">
    <property type="term" value="P:endoplasmic reticulum to Golgi vesicle-mediated transport"/>
    <property type="evidence" value="ECO:0000250"/>
    <property type="project" value="HGNC-UCL"/>
</dbReference>
<dbReference type="GO" id="GO:0015031">
    <property type="term" value="P:protein transport"/>
    <property type="evidence" value="ECO:0007669"/>
    <property type="project" value="UniProtKB-KW"/>
</dbReference>
<dbReference type="GO" id="GO:0006904">
    <property type="term" value="P:vesicle docking involved in exocytosis"/>
    <property type="evidence" value="ECO:0000250"/>
    <property type="project" value="HGNC-UCL"/>
</dbReference>
<dbReference type="GO" id="GO:0006903">
    <property type="term" value="P:vesicle targeting"/>
    <property type="evidence" value="ECO:0000250"/>
    <property type="project" value="HGNC-UCL"/>
</dbReference>
<dbReference type="CDD" id="cd14824">
    <property type="entry name" value="Longin"/>
    <property type="match status" value="1"/>
</dbReference>
<dbReference type="CDD" id="cd15867">
    <property type="entry name" value="R-SNARE_YKT6"/>
    <property type="match status" value="1"/>
</dbReference>
<dbReference type="FunFam" id="3.30.450.50:FF:000013">
    <property type="entry name" value="Synaptobrevin homolog YKT6"/>
    <property type="match status" value="1"/>
</dbReference>
<dbReference type="FunFam" id="1.20.5.110:FF:000020">
    <property type="entry name" value="synaptobrevin homolog YKT6"/>
    <property type="match status" value="1"/>
</dbReference>
<dbReference type="Gene3D" id="1.20.5.110">
    <property type="match status" value="1"/>
</dbReference>
<dbReference type="Gene3D" id="3.30.450.50">
    <property type="entry name" value="Longin domain"/>
    <property type="match status" value="1"/>
</dbReference>
<dbReference type="InterPro" id="IPR011012">
    <property type="entry name" value="Longin-like_dom_sf"/>
</dbReference>
<dbReference type="InterPro" id="IPR010908">
    <property type="entry name" value="Longin_dom"/>
</dbReference>
<dbReference type="InterPro" id="IPR045848">
    <property type="entry name" value="R-SNARE_YKT6"/>
</dbReference>
<dbReference type="InterPro" id="IPR042855">
    <property type="entry name" value="V_SNARE_CC"/>
</dbReference>
<dbReference type="PANTHER" id="PTHR45806">
    <property type="entry name" value="SYNAPTOBREVIN HOMOLOG YKT6"/>
    <property type="match status" value="1"/>
</dbReference>
<dbReference type="PANTHER" id="PTHR45806:SF1">
    <property type="entry name" value="SYNAPTOBREVIN HOMOLOG YKT6"/>
    <property type="match status" value="1"/>
</dbReference>
<dbReference type="Pfam" id="PF13774">
    <property type="entry name" value="Longin"/>
    <property type="match status" value="1"/>
</dbReference>
<dbReference type="Pfam" id="PF00957">
    <property type="entry name" value="Synaptobrevin"/>
    <property type="match status" value="1"/>
</dbReference>
<dbReference type="SMART" id="SM01270">
    <property type="entry name" value="Longin"/>
    <property type="match status" value="1"/>
</dbReference>
<dbReference type="SUPFAM" id="SSF58038">
    <property type="entry name" value="SNARE fusion complex"/>
    <property type="match status" value="1"/>
</dbReference>
<dbReference type="SUPFAM" id="SSF64356">
    <property type="entry name" value="SNARE-like"/>
    <property type="match status" value="1"/>
</dbReference>
<dbReference type="PROSITE" id="PS50859">
    <property type="entry name" value="LONGIN"/>
    <property type="match status" value="1"/>
</dbReference>
<dbReference type="PROSITE" id="PS50892">
    <property type="entry name" value="V_SNARE"/>
    <property type="match status" value="1"/>
</dbReference>
<keyword id="KW-0175">Coiled coil</keyword>
<keyword id="KW-0963">Cytoplasm</keyword>
<keyword id="KW-0968">Cytoplasmic vesicle</keyword>
<keyword id="KW-0931">ER-Golgi transport</keyword>
<keyword id="KW-0333">Golgi apparatus</keyword>
<keyword id="KW-0449">Lipoprotein</keyword>
<keyword id="KW-0472">Membrane</keyword>
<keyword id="KW-0488">Methylation</keyword>
<keyword id="KW-0564">Palmitate</keyword>
<keyword id="KW-0636">Prenylation</keyword>
<keyword id="KW-0653">Protein transport</keyword>
<keyword id="KW-1185">Reference proteome</keyword>
<keyword id="KW-0808">Transferase</keyword>
<keyword id="KW-0813">Transport</keyword>
<gene>
    <name type="primary">ykt6-b</name>
</gene>
<organism>
    <name type="scientific">Xenopus laevis</name>
    <name type="common">African clawed frog</name>
    <dbReference type="NCBI Taxonomy" id="8355"/>
    <lineage>
        <taxon>Eukaryota</taxon>
        <taxon>Metazoa</taxon>
        <taxon>Chordata</taxon>
        <taxon>Craniata</taxon>
        <taxon>Vertebrata</taxon>
        <taxon>Euteleostomi</taxon>
        <taxon>Amphibia</taxon>
        <taxon>Batrachia</taxon>
        <taxon>Anura</taxon>
        <taxon>Pipoidea</taxon>
        <taxon>Pipidae</taxon>
        <taxon>Xenopodinae</taxon>
        <taxon>Xenopus</taxon>
        <taxon>Xenopus</taxon>
    </lineage>
</organism>
<comment type="function">
    <text evidence="2">Vesicular soluble NSF attachment protein receptor (v-SNARE) mediating vesicle docking and fusion to a specific acceptor cellular compartment. Functions in endoplasmic reticulum to Golgi transport; as part of a SNARE complex composed of GOSR1, GOSR2 and STX5. Functions in early/recycling endosome to TGN transport; as part of a SNARE complex composed of BET1L, GOSR1 and STX5. Has a S-palmitoyl transferase activity.</text>
</comment>
<comment type="subcellular location">
    <subcellularLocation>
        <location evidence="1">Cytoplasm</location>
        <location evidence="1">Cytosol</location>
    </subcellularLocation>
    <subcellularLocation>
        <location evidence="1">Cytoplasmic vesicle membrane</location>
        <topology evidence="1">Lipid-anchor</topology>
        <orientation evidence="1">Cytoplasmic side</orientation>
    </subcellularLocation>
    <subcellularLocation>
        <location evidence="1">Golgi apparatus membrane</location>
        <topology evidence="1">Lipid-anchor</topology>
        <orientation evidence="1">Cytoplasmic side</orientation>
    </subcellularLocation>
    <text evidence="1">Probably cycles through vesicles between Golgi and endosomes.</text>
</comment>
<comment type="domain">
    <text evidence="1">The longin domain regulates palmitoylation and membrane targeting.</text>
</comment>
<comment type="PTM">
    <text evidence="2">Palmitoylated; catalyzes its own palmitoylation. Palmitoylation is required for Golgi targeting.</text>
</comment>
<comment type="PTM">
    <text evidence="2">Farnesylation is required for Golgi targeting.</text>
</comment>
<comment type="similarity">
    <text evidence="5">Belongs to the synaptobrevin family.</text>
</comment>
<accession>Q32N70</accession>
<proteinExistence type="evidence at transcript level"/>
<feature type="chain" id="PRO_0000280714" description="Synaptobrevin homolog YKT6-B">
    <location>
        <begin position="1"/>
        <end position="195"/>
    </location>
</feature>
<feature type="propeptide" id="PRO_0000396666" description="Removed in mature form" evidence="1">
    <location>
        <begin position="196"/>
        <end position="198"/>
    </location>
</feature>
<feature type="domain" description="Longin" evidence="3">
    <location>
        <begin position="8"/>
        <end position="127"/>
    </location>
</feature>
<feature type="domain" description="v-SNARE coiled-coil homology" evidence="4">
    <location>
        <begin position="138"/>
        <end position="198"/>
    </location>
</feature>
<feature type="modified residue" description="Cysteine methyl ester" evidence="1">
    <location>
        <position position="195"/>
    </location>
</feature>
<feature type="lipid moiety-binding region" description="S-palmitoyl cysteine" evidence="1">
    <location>
        <position position="194"/>
    </location>
</feature>
<feature type="lipid moiety-binding region" description="S-farnesyl cysteine" evidence="1">
    <location>
        <position position="195"/>
    </location>
</feature>
<sequence length="198" mass="22613">MKLYSLSVLYKGENKVHLLKSAYDVSSFSFFQRSSVQEFMTFTSQLIVERSDKGSRSSVKEQEYLCHVYVRNDSLAGVVIADNEYPPRVCFTLLEKVLEEFSTQVDRIDWPSGSPATIQYNALDSYLSKYQNPRDADPMSKVQAELDETKIVLHNTMESLLQRGEKLDDLVSKSEVLGTQSKAFYKTARKQNSCCDIM</sequence>
<reference key="1">
    <citation type="submission" date="2005-11" db="EMBL/GenBank/DDBJ databases">
        <authorList>
            <consortium name="NIH - Xenopus Gene Collection (XGC) project"/>
        </authorList>
    </citation>
    <scope>NUCLEOTIDE SEQUENCE [LARGE SCALE MRNA]</scope>
    <source>
        <tissue>Oocyte</tissue>
    </source>
</reference>
<evidence type="ECO:0000250" key="1"/>
<evidence type="ECO:0000250" key="2">
    <source>
        <dbReference type="UniProtKB" id="O15498"/>
    </source>
</evidence>
<evidence type="ECO:0000255" key="3">
    <source>
        <dbReference type="PROSITE-ProRule" id="PRU00231"/>
    </source>
</evidence>
<evidence type="ECO:0000255" key="4">
    <source>
        <dbReference type="PROSITE-ProRule" id="PRU00290"/>
    </source>
</evidence>
<evidence type="ECO:0000305" key="5"/>
<protein>
    <recommendedName>
        <fullName>Synaptobrevin homolog YKT6-B</fullName>
        <ecNumber>2.3.1.-</ecNumber>
    </recommendedName>
</protein>
<name>YKT6B_XENLA</name>